<evidence type="ECO:0000255" key="1">
    <source>
        <dbReference type="HAMAP-Rule" id="MF_00193"/>
    </source>
</evidence>
<organism>
    <name type="scientific">Streptococcus agalactiae serotype Ia (strain ATCC 27591 / A909 / CDC SS700)</name>
    <dbReference type="NCBI Taxonomy" id="205921"/>
    <lineage>
        <taxon>Bacteria</taxon>
        <taxon>Bacillati</taxon>
        <taxon>Bacillota</taxon>
        <taxon>Bacilli</taxon>
        <taxon>Lactobacillales</taxon>
        <taxon>Streptococcaceae</taxon>
        <taxon>Streptococcus</taxon>
    </lineage>
</organism>
<feature type="chain" id="PRO_1000077623" description="NH(3)-dependent NAD(+) synthetase">
    <location>
        <begin position="1"/>
        <end position="273"/>
    </location>
</feature>
<feature type="binding site" evidence="1">
    <location>
        <begin position="46"/>
        <end position="53"/>
    </location>
    <ligand>
        <name>ATP</name>
        <dbReference type="ChEBI" id="CHEBI:30616"/>
    </ligand>
</feature>
<feature type="binding site" evidence="1">
    <location>
        <position position="52"/>
    </location>
    <ligand>
        <name>Mg(2+)</name>
        <dbReference type="ChEBI" id="CHEBI:18420"/>
    </ligand>
</feature>
<feature type="binding site" evidence="1">
    <location>
        <position position="139"/>
    </location>
    <ligand>
        <name>deamido-NAD(+)</name>
        <dbReference type="ChEBI" id="CHEBI:58437"/>
    </ligand>
</feature>
<feature type="binding site" evidence="1">
    <location>
        <position position="159"/>
    </location>
    <ligand>
        <name>ATP</name>
        <dbReference type="ChEBI" id="CHEBI:30616"/>
    </ligand>
</feature>
<feature type="binding site" evidence="1">
    <location>
        <position position="164"/>
    </location>
    <ligand>
        <name>Mg(2+)</name>
        <dbReference type="ChEBI" id="CHEBI:18420"/>
    </ligand>
</feature>
<feature type="binding site" evidence="1">
    <location>
        <position position="172"/>
    </location>
    <ligand>
        <name>deamido-NAD(+)</name>
        <dbReference type="ChEBI" id="CHEBI:58437"/>
    </ligand>
</feature>
<feature type="binding site" evidence="1">
    <location>
        <position position="179"/>
    </location>
    <ligand>
        <name>deamido-NAD(+)</name>
        <dbReference type="ChEBI" id="CHEBI:58437"/>
    </ligand>
</feature>
<feature type="binding site" evidence="1">
    <location>
        <position position="188"/>
    </location>
    <ligand>
        <name>ATP</name>
        <dbReference type="ChEBI" id="CHEBI:30616"/>
    </ligand>
</feature>
<feature type="binding site" evidence="1">
    <location>
        <position position="210"/>
    </location>
    <ligand>
        <name>ATP</name>
        <dbReference type="ChEBI" id="CHEBI:30616"/>
    </ligand>
</feature>
<feature type="binding site" evidence="1">
    <location>
        <begin position="259"/>
        <end position="260"/>
    </location>
    <ligand>
        <name>deamido-NAD(+)</name>
        <dbReference type="ChEBI" id="CHEBI:58437"/>
    </ligand>
</feature>
<protein>
    <recommendedName>
        <fullName evidence="1">NH(3)-dependent NAD(+) synthetase</fullName>
        <ecNumber evidence="1">6.3.1.5</ecNumber>
    </recommendedName>
</protein>
<gene>
    <name evidence="1" type="primary">nadE</name>
    <name type="ordered locus">SAK_0368</name>
</gene>
<comment type="function">
    <text evidence="1">Catalyzes the ATP-dependent amidation of deamido-NAD to form NAD. Uses ammonia as a nitrogen source.</text>
</comment>
<comment type="catalytic activity">
    <reaction evidence="1">
        <text>deamido-NAD(+) + NH4(+) + ATP = AMP + diphosphate + NAD(+) + H(+)</text>
        <dbReference type="Rhea" id="RHEA:21188"/>
        <dbReference type="ChEBI" id="CHEBI:15378"/>
        <dbReference type="ChEBI" id="CHEBI:28938"/>
        <dbReference type="ChEBI" id="CHEBI:30616"/>
        <dbReference type="ChEBI" id="CHEBI:33019"/>
        <dbReference type="ChEBI" id="CHEBI:57540"/>
        <dbReference type="ChEBI" id="CHEBI:58437"/>
        <dbReference type="ChEBI" id="CHEBI:456215"/>
        <dbReference type="EC" id="6.3.1.5"/>
    </reaction>
</comment>
<comment type="pathway">
    <text evidence="1">Cofactor biosynthesis; NAD(+) biosynthesis; NAD(+) from deamido-NAD(+) (ammonia route): step 1/1.</text>
</comment>
<comment type="subunit">
    <text evidence="1">Homodimer.</text>
</comment>
<comment type="similarity">
    <text evidence="1">Belongs to the NAD synthetase family.</text>
</comment>
<proteinExistence type="inferred from homology"/>
<sequence length="273" mass="30300">MTLQDQIIKELGVKPVINPSQEIRRSVEFLKDYLLKHSFLKTYVLGISGGQDSTLAGRLAQLAVEELRADTGENYQFIAIRLPYGIQADEEDAQKALDFIKPDIALTINIKEAVDGQVRALNAAGVEITDFNKGNIKARQRMISQYAVAGQYAGAVIGTDHAAENITGFFTKFGDGGADLLPLFRLNKSQGKQLLAELGADKALYEKIPTADLEENKPGIADEIALGVTYQEIDAYLEGKVVSDKSRGIIENWWYKGQHKRHLPITIFDDFWK</sequence>
<accession>Q3K383</accession>
<reference key="1">
    <citation type="journal article" date="2005" name="Proc. Natl. Acad. Sci. U.S.A.">
        <title>Genome analysis of multiple pathogenic isolates of Streptococcus agalactiae: implications for the microbial 'pan-genome'.</title>
        <authorList>
            <person name="Tettelin H."/>
            <person name="Masignani V."/>
            <person name="Cieslewicz M.J."/>
            <person name="Donati C."/>
            <person name="Medini D."/>
            <person name="Ward N.L."/>
            <person name="Angiuoli S.V."/>
            <person name="Crabtree J."/>
            <person name="Jones A.L."/>
            <person name="Durkin A.S."/>
            <person name="DeBoy R.T."/>
            <person name="Davidsen T.M."/>
            <person name="Mora M."/>
            <person name="Scarselli M."/>
            <person name="Margarit y Ros I."/>
            <person name="Peterson J.D."/>
            <person name="Hauser C.R."/>
            <person name="Sundaram J.P."/>
            <person name="Nelson W.C."/>
            <person name="Madupu R."/>
            <person name="Brinkac L.M."/>
            <person name="Dodson R.J."/>
            <person name="Rosovitz M.J."/>
            <person name="Sullivan S.A."/>
            <person name="Daugherty S.C."/>
            <person name="Haft D.H."/>
            <person name="Selengut J."/>
            <person name="Gwinn M.L."/>
            <person name="Zhou L."/>
            <person name="Zafar N."/>
            <person name="Khouri H."/>
            <person name="Radune D."/>
            <person name="Dimitrov G."/>
            <person name="Watkins K."/>
            <person name="O'Connor K.J."/>
            <person name="Smith S."/>
            <person name="Utterback T.R."/>
            <person name="White O."/>
            <person name="Rubens C.E."/>
            <person name="Grandi G."/>
            <person name="Madoff L.C."/>
            <person name="Kasper D.L."/>
            <person name="Telford J.L."/>
            <person name="Wessels M.R."/>
            <person name="Rappuoli R."/>
            <person name="Fraser C.M."/>
        </authorList>
    </citation>
    <scope>NUCLEOTIDE SEQUENCE [LARGE SCALE GENOMIC DNA]</scope>
    <source>
        <strain>ATCC 27591 / A909 / CDC SS700</strain>
    </source>
</reference>
<keyword id="KW-0067">ATP-binding</keyword>
<keyword id="KW-0436">Ligase</keyword>
<keyword id="KW-0460">Magnesium</keyword>
<keyword id="KW-0479">Metal-binding</keyword>
<keyword id="KW-0520">NAD</keyword>
<keyword id="KW-0547">Nucleotide-binding</keyword>
<dbReference type="EC" id="6.3.1.5" evidence="1"/>
<dbReference type="EMBL" id="CP000114">
    <property type="protein sequence ID" value="ABA45292.1"/>
    <property type="molecule type" value="Genomic_DNA"/>
</dbReference>
<dbReference type="RefSeq" id="WP_000174854.1">
    <property type="nucleotide sequence ID" value="NC_007432.1"/>
</dbReference>
<dbReference type="SMR" id="Q3K383"/>
<dbReference type="KEGG" id="sak:SAK_0368"/>
<dbReference type="HOGENOM" id="CLU_059327_3_0_9"/>
<dbReference type="UniPathway" id="UPA00253">
    <property type="reaction ID" value="UER00333"/>
</dbReference>
<dbReference type="GO" id="GO:0005737">
    <property type="term" value="C:cytoplasm"/>
    <property type="evidence" value="ECO:0007669"/>
    <property type="project" value="InterPro"/>
</dbReference>
<dbReference type="GO" id="GO:0005524">
    <property type="term" value="F:ATP binding"/>
    <property type="evidence" value="ECO:0007669"/>
    <property type="project" value="UniProtKB-UniRule"/>
</dbReference>
<dbReference type="GO" id="GO:0004359">
    <property type="term" value="F:glutaminase activity"/>
    <property type="evidence" value="ECO:0007669"/>
    <property type="project" value="InterPro"/>
</dbReference>
<dbReference type="GO" id="GO:0046872">
    <property type="term" value="F:metal ion binding"/>
    <property type="evidence" value="ECO:0007669"/>
    <property type="project" value="UniProtKB-KW"/>
</dbReference>
<dbReference type="GO" id="GO:0003952">
    <property type="term" value="F:NAD+ synthase (glutamine-hydrolyzing) activity"/>
    <property type="evidence" value="ECO:0007669"/>
    <property type="project" value="InterPro"/>
</dbReference>
<dbReference type="GO" id="GO:0008795">
    <property type="term" value="F:NAD+ synthase activity"/>
    <property type="evidence" value="ECO:0007669"/>
    <property type="project" value="UniProtKB-UniRule"/>
</dbReference>
<dbReference type="GO" id="GO:0009435">
    <property type="term" value="P:NAD biosynthetic process"/>
    <property type="evidence" value="ECO:0007669"/>
    <property type="project" value="UniProtKB-UniRule"/>
</dbReference>
<dbReference type="CDD" id="cd00553">
    <property type="entry name" value="NAD_synthase"/>
    <property type="match status" value="1"/>
</dbReference>
<dbReference type="FunFam" id="3.40.50.620:FF:000015">
    <property type="entry name" value="NH(3)-dependent NAD(+) synthetase"/>
    <property type="match status" value="1"/>
</dbReference>
<dbReference type="Gene3D" id="3.40.50.620">
    <property type="entry name" value="HUPs"/>
    <property type="match status" value="1"/>
</dbReference>
<dbReference type="HAMAP" id="MF_00193">
    <property type="entry name" value="NadE_ammonia_dep"/>
    <property type="match status" value="1"/>
</dbReference>
<dbReference type="InterPro" id="IPR022310">
    <property type="entry name" value="NAD/GMP_synthase"/>
</dbReference>
<dbReference type="InterPro" id="IPR003694">
    <property type="entry name" value="NAD_synthase"/>
</dbReference>
<dbReference type="InterPro" id="IPR022926">
    <property type="entry name" value="NH(3)-dep_NAD(+)_synth"/>
</dbReference>
<dbReference type="InterPro" id="IPR014729">
    <property type="entry name" value="Rossmann-like_a/b/a_fold"/>
</dbReference>
<dbReference type="NCBIfam" id="TIGR00552">
    <property type="entry name" value="nadE"/>
    <property type="match status" value="1"/>
</dbReference>
<dbReference type="NCBIfam" id="NF001979">
    <property type="entry name" value="PRK00768.1"/>
    <property type="match status" value="1"/>
</dbReference>
<dbReference type="PANTHER" id="PTHR23090">
    <property type="entry name" value="NH 3 /GLUTAMINE-DEPENDENT NAD + SYNTHETASE"/>
    <property type="match status" value="1"/>
</dbReference>
<dbReference type="PANTHER" id="PTHR23090:SF7">
    <property type="entry name" value="NH(3)-DEPENDENT NAD(+) SYNTHETASE"/>
    <property type="match status" value="1"/>
</dbReference>
<dbReference type="Pfam" id="PF02540">
    <property type="entry name" value="NAD_synthase"/>
    <property type="match status" value="1"/>
</dbReference>
<dbReference type="SUPFAM" id="SSF52402">
    <property type="entry name" value="Adenine nucleotide alpha hydrolases-like"/>
    <property type="match status" value="1"/>
</dbReference>
<name>NADE_STRA1</name>